<comment type="function">
    <text evidence="11 12 17 21">Involved in the transfer of neutral lipids, including cholesteryl ester and triglyceride, among lipoprotein particles. Allows the net movement of cholesteryl ester from high density lipoproteins/HDL to triglyceride-rich very low density lipoproteins/VLDL, and the equimolar transport of triglyceride from VLDL to HDL (PubMed:24293641, PubMed:3281933, PubMed:3600759). Regulates the reverse cholesterol transport, by which excess cholesterol is removed from peripheral tissues and returned to the liver for elimination (PubMed:17237796).</text>
</comment>
<comment type="catalytic activity">
    <reaction evidence="11">
        <text>cholesteryl (9Z-octadecenoate)(in) = cholesteryl (9Z-octadecenoate)(out)</text>
        <dbReference type="Rhea" id="RHEA:43348"/>
        <dbReference type="ChEBI" id="CHEBI:46898"/>
    </reaction>
</comment>
<comment type="catalytic activity">
    <reaction evidence="11 12">
        <text>1,2,3-tri-(9Z-octadecenoyl)-glycerol(in) = 1,2,3-tri-(9Z-octadecenoyl)-glycerol(out)</text>
        <dbReference type="Rhea" id="RHEA:43352"/>
        <dbReference type="ChEBI" id="CHEBI:53753"/>
    </reaction>
</comment>
<comment type="catalytic activity">
    <reaction evidence="12">
        <text>cholesteryl (9Z,12Z)-octadecadienoate(in) = cholesteryl (9Z,12Z)-octadecadienoate(out)</text>
        <dbReference type="Rhea" id="RHEA:43356"/>
        <dbReference type="ChEBI" id="CHEBI:41509"/>
    </reaction>
</comment>
<comment type="subcellular location">
    <subcellularLocation>
        <location evidence="11 12">Secreted</location>
    </subcellularLocation>
    <text evidence="12">Secreted in plasma.</text>
</comment>
<comment type="alternative products">
    <event type="alternative splicing"/>
    <isoform>
        <id>P11597-1</id>
        <name>1</name>
        <sequence type="displayed"/>
    </isoform>
    <isoform>
        <id>P11597-2</id>
        <name>2</name>
        <sequence type="described" ref="VSP_023645"/>
    </isoform>
</comment>
<comment type="tissue specificity">
    <text evidence="12">Expressed by the liver and secreted in plasma.</text>
</comment>
<comment type="polymorphism">
    <text evidence="8">Genetic variations in CETP define the high density lipoprotein cholesterol level quantitative trait locus 10 (HDLCQ10) [MIM:143470].</text>
</comment>
<comment type="disease" evidence="3 10 14">
    <disease id="DI-01764">
        <name>Hyperalphalipoproteinemia 1</name>
        <acronym>HALP1</acronym>
        <description>A condition characterized by high levels of high density lipoprotein (HDL) and increased HDL cholesterol levels.</description>
        <dbReference type="MIM" id="143470"/>
    </disease>
    <text>The disease is caused by variants affecting the gene represented in this entry.</text>
</comment>
<comment type="similarity">
    <text evidence="20">Belongs to the BPI/LBP/Plunc superfamily. BPI/LBP family.</text>
</comment>
<comment type="online information" name="Wikipedia">
    <link uri="https://en.wikipedia.org/wiki/Cholesterylester_transfer_protein"/>
    <text>Cholesterylester transfer protein entry</text>
</comment>
<accession>P11597</accession>
<accession>Q13987</accession>
<accession>Q13988</accession>
<accession>Q53YZ1</accession>
<organism>
    <name type="scientific">Homo sapiens</name>
    <name type="common">Human</name>
    <dbReference type="NCBI Taxonomy" id="9606"/>
    <lineage>
        <taxon>Eukaryota</taxon>
        <taxon>Metazoa</taxon>
        <taxon>Chordata</taxon>
        <taxon>Craniata</taxon>
        <taxon>Vertebrata</taxon>
        <taxon>Euteleostomi</taxon>
        <taxon>Mammalia</taxon>
        <taxon>Eutheria</taxon>
        <taxon>Euarchontoglires</taxon>
        <taxon>Primates</taxon>
        <taxon>Haplorrhini</taxon>
        <taxon>Catarrhini</taxon>
        <taxon>Hominidae</taxon>
        <taxon>Homo</taxon>
    </lineage>
</organism>
<proteinExistence type="evidence at protein level"/>
<dbReference type="EMBL" id="M30185">
    <property type="protein sequence ID" value="AAA51977.1"/>
    <property type="molecule type" value="mRNA"/>
</dbReference>
<dbReference type="EMBL" id="M32998">
    <property type="protein sequence ID" value="AAA51978.1"/>
    <property type="molecule type" value="Genomic_DNA"/>
</dbReference>
<dbReference type="EMBL" id="M32992">
    <property type="protein sequence ID" value="AAA51978.1"/>
    <property type="status" value="JOINED"/>
    <property type="molecule type" value="Genomic_DNA"/>
</dbReference>
<dbReference type="EMBL" id="M32993">
    <property type="protein sequence ID" value="AAA51978.1"/>
    <property type="status" value="JOINED"/>
    <property type="molecule type" value="Genomic_DNA"/>
</dbReference>
<dbReference type="EMBL" id="M32994">
    <property type="protein sequence ID" value="AAA51978.1"/>
    <property type="status" value="JOINED"/>
    <property type="molecule type" value="Genomic_DNA"/>
</dbReference>
<dbReference type="EMBL" id="M32995">
    <property type="protein sequence ID" value="AAA51978.1"/>
    <property type="status" value="JOINED"/>
    <property type="molecule type" value="Genomic_DNA"/>
</dbReference>
<dbReference type="EMBL" id="M32996">
    <property type="protein sequence ID" value="AAA51978.1"/>
    <property type="status" value="JOINED"/>
    <property type="molecule type" value="Genomic_DNA"/>
</dbReference>
<dbReference type="EMBL" id="M32997">
    <property type="protein sequence ID" value="AAA51978.1"/>
    <property type="status" value="JOINED"/>
    <property type="molecule type" value="Genomic_DNA"/>
</dbReference>
<dbReference type="EMBL" id="AY422211">
    <property type="protein sequence ID" value="AAR03500.1"/>
    <property type="molecule type" value="Genomic_DNA"/>
</dbReference>
<dbReference type="EMBL" id="BC025739">
    <property type="protein sequence ID" value="AAH25739.1"/>
    <property type="molecule type" value="mRNA"/>
</dbReference>
<dbReference type="EMBL" id="U71187">
    <property type="protein sequence ID" value="AAD14876.1"/>
    <property type="molecule type" value="Genomic_DNA"/>
</dbReference>
<dbReference type="EMBL" id="AF027656">
    <property type="protein sequence ID" value="AAB86604.1"/>
    <property type="molecule type" value="Genomic_DNA"/>
</dbReference>
<dbReference type="EMBL" id="M83573">
    <property type="protein sequence ID" value="AAB59388.1"/>
    <property type="molecule type" value="mRNA"/>
</dbReference>
<dbReference type="CCDS" id="CCDS10772.1">
    <molecule id="P11597-1"/>
</dbReference>
<dbReference type="CCDS" id="CCDS67032.1">
    <molecule id="P11597-2"/>
</dbReference>
<dbReference type="PIR" id="A26941">
    <property type="entry name" value="A26941"/>
</dbReference>
<dbReference type="RefSeq" id="NP_000069.2">
    <molecule id="P11597-1"/>
    <property type="nucleotide sequence ID" value="NM_000078.3"/>
</dbReference>
<dbReference type="RefSeq" id="NP_001273014.1">
    <molecule id="P11597-2"/>
    <property type="nucleotide sequence ID" value="NM_001286085.2"/>
</dbReference>
<dbReference type="PDB" id="2OBD">
    <property type="method" value="X-ray"/>
    <property type="resolution" value="2.10 A"/>
    <property type="chains" value="A=18-493"/>
</dbReference>
<dbReference type="PDB" id="4EWS">
    <property type="method" value="X-ray"/>
    <property type="resolution" value="2.59 A"/>
    <property type="chains" value="A=18-493"/>
</dbReference>
<dbReference type="PDB" id="4F2A">
    <property type="method" value="X-ray"/>
    <property type="resolution" value="3.11 A"/>
    <property type="chains" value="A=18-493"/>
</dbReference>
<dbReference type="PDBsum" id="2OBD"/>
<dbReference type="PDBsum" id="4EWS"/>
<dbReference type="PDBsum" id="4F2A"/>
<dbReference type="SMR" id="P11597"/>
<dbReference type="BioGRID" id="107498">
    <property type="interactions" value="3"/>
</dbReference>
<dbReference type="FunCoup" id="P11597">
    <property type="interactions" value="22"/>
</dbReference>
<dbReference type="IntAct" id="P11597">
    <property type="interactions" value="4"/>
</dbReference>
<dbReference type="STRING" id="9606.ENSP00000200676"/>
<dbReference type="BindingDB" id="P11597"/>
<dbReference type="ChEMBL" id="CHEMBL3572"/>
<dbReference type="DrugBank" id="DB06630">
    <property type="generic name" value="Anacetrapib"/>
</dbReference>
<dbReference type="DrugBank" id="DB12181">
    <property type="generic name" value="Dalcetrapib"/>
</dbReference>
<dbReference type="DrugBank" id="DB11655">
    <property type="generic name" value="Evacetrapib"/>
</dbReference>
<dbReference type="DrugBank" id="DB14890">
    <property type="generic name" value="Obicetrapib"/>
</dbReference>
<dbReference type="DrugBank" id="DB06281">
    <property type="generic name" value="Torcetrapib"/>
</dbReference>
<dbReference type="GuidetoPHARMACOLOGY" id="3248"/>
<dbReference type="SwissLipids" id="SLP:000000472"/>
<dbReference type="TCDB" id="1.C.40.1.8">
    <property type="family name" value="the bactericidal permeability increasing protein (bpip) family"/>
</dbReference>
<dbReference type="GlyConnect" id="1927">
    <property type="glycosylation" value="8 N-Linked glycans (2 sites)"/>
</dbReference>
<dbReference type="GlyCosmos" id="P11597">
    <property type="glycosylation" value="5 sites, 9 glycans"/>
</dbReference>
<dbReference type="GlyGen" id="P11597">
    <property type="glycosylation" value="5 sites, 14 N-linked glycans (3 sites), 1 O-linked glycan (1 site)"/>
</dbReference>
<dbReference type="iPTMnet" id="P11597"/>
<dbReference type="PhosphoSitePlus" id="P11597"/>
<dbReference type="SwissPalm" id="P11597"/>
<dbReference type="BioMuta" id="CETP"/>
<dbReference type="DMDM" id="71153497"/>
<dbReference type="MassIVE" id="P11597"/>
<dbReference type="PaxDb" id="9606-ENSP00000200676"/>
<dbReference type="PeptideAtlas" id="P11597"/>
<dbReference type="ProteomicsDB" id="52795">
    <molecule id="P11597-1"/>
</dbReference>
<dbReference type="ProteomicsDB" id="52796">
    <molecule id="P11597-2"/>
</dbReference>
<dbReference type="Antibodypedia" id="28719">
    <property type="antibodies" value="439 antibodies from 35 providers"/>
</dbReference>
<dbReference type="DNASU" id="1071"/>
<dbReference type="Ensembl" id="ENST00000200676.8">
    <molecule id="P11597-1"/>
    <property type="protein sequence ID" value="ENSP00000200676.3"/>
    <property type="gene ID" value="ENSG00000087237.12"/>
</dbReference>
<dbReference type="Ensembl" id="ENST00000379780.6">
    <molecule id="P11597-2"/>
    <property type="protein sequence ID" value="ENSP00000369106.2"/>
    <property type="gene ID" value="ENSG00000087237.12"/>
</dbReference>
<dbReference type="GeneID" id="1071"/>
<dbReference type="KEGG" id="hsa:1071"/>
<dbReference type="MANE-Select" id="ENST00000200676.8">
    <property type="protein sequence ID" value="ENSP00000200676.3"/>
    <property type="RefSeq nucleotide sequence ID" value="NM_000078.3"/>
    <property type="RefSeq protein sequence ID" value="NP_000069.2"/>
</dbReference>
<dbReference type="UCSC" id="uc002eki.3">
    <molecule id="P11597-1"/>
    <property type="organism name" value="human"/>
</dbReference>
<dbReference type="AGR" id="HGNC:1869"/>
<dbReference type="CTD" id="1071"/>
<dbReference type="DisGeNET" id="1071"/>
<dbReference type="GeneCards" id="CETP"/>
<dbReference type="HGNC" id="HGNC:1869">
    <property type="gene designation" value="CETP"/>
</dbReference>
<dbReference type="HPA" id="ENSG00000087237">
    <property type="expression patterns" value="Group enriched (adipose tissue, liver, lymphoid tissue, placenta)"/>
</dbReference>
<dbReference type="MalaCards" id="CETP"/>
<dbReference type="MIM" id="118470">
    <property type="type" value="gene"/>
</dbReference>
<dbReference type="MIM" id="143470">
    <property type="type" value="phenotype"/>
</dbReference>
<dbReference type="neXtProt" id="NX_P11597"/>
<dbReference type="OpenTargets" id="ENSG00000087237"/>
<dbReference type="Orphanet" id="181428">
    <property type="disease" value="Familial Hyperalphalipoproteinemia"/>
</dbReference>
<dbReference type="PharmGKB" id="PA108"/>
<dbReference type="VEuPathDB" id="HostDB:ENSG00000087237"/>
<dbReference type="eggNOG" id="KOG4160">
    <property type="taxonomic scope" value="Eukaryota"/>
</dbReference>
<dbReference type="GeneTree" id="ENSGT01130000278326"/>
<dbReference type="HOGENOM" id="CLU_043151_0_0_1"/>
<dbReference type="InParanoid" id="P11597"/>
<dbReference type="OMA" id="WFSDHVL"/>
<dbReference type="OrthoDB" id="9940758at2759"/>
<dbReference type="PAN-GO" id="P11597">
    <property type="GO annotations" value="15 GO annotations based on evolutionary models"/>
</dbReference>
<dbReference type="PhylomeDB" id="P11597"/>
<dbReference type="TreeFam" id="TF333484"/>
<dbReference type="PathwayCommons" id="P11597"/>
<dbReference type="Reactome" id="R-HSA-8964041">
    <property type="pathway name" value="LDL remodeling"/>
</dbReference>
<dbReference type="Reactome" id="R-HSA-8964058">
    <property type="pathway name" value="HDL remodeling"/>
</dbReference>
<dbReference type="Reactome" id="R-HSA-9029569">
    <property type="pathway name" value="NR1H3 &amp; NR1H2 regulate gene expression linked to cholesterol transport and efflux"/>
</dbReference>
<dbReference type="SignaLink" id="P11597"/>
<dbReference type="SIGNOR" id="P11597"/>
<dbReference type="BioGRID-ORCS" id="1071">
    <property type="hits" value="15 hits in 1148 CRISPR screens"/>
</dbReference>
<dbReference type="EvolutionaryTrace" id="P11597"/>
<dbReference type="GeneWiki" id="Cholesterylester_transfer_protein"/>
<dbReference type="GenomeRNAi" id="1071"/>
<dbReference type="Pharos" id="P11597">
    <property type="development level" value="Tchem"/>
</dbReference>
<dbReference type="PRO" id="PR:P11597"/>
<dbReference type="Proteomes" id="UP000005640">
    <property type="component" value="Chromosome 16"/>
</dbReference>
<dbReference type="RNAct" id="P11597">
    <property type="molecule type" value="protein"/>
</dbReference>
<dbReference type="Bgee" id="ENSG00000087237">
    <property type="expression patterns" value="Expressed in lymph node and 101 other cell types or tissues"/>
</dbReference>
<dbReference type="ExpressionAtlas" id="P11597">
    <property type="expression patterns" value="baseline and differential"/>
</dbReference>
<dbReference type="GO" id="GO:0070062">
    <property type="term" value="C:extracellular exosome"/>
    <property type="evidence" value="ECO:0007005"/>
    <property type="project" value="UniProtKB"/>
</dbReference>
<dbReference type="GO" id="GO:0005576">
    <property type="term" value="C:extracellular region"/>
    <property type="evidence" value="ECO:0000304"/>
    <property type="project" value="Reactome"/>
</dbReference>
<dbReference type="GO" id="GO:0005615">
    <property type="term" value="C:extracellular space"/>
    <property type="evidence" value="ECO:0000314"/>
    <property type="project" value="UniProtKB"/>
</dbReference>
<dbReference type="GO" id="GO:0034364">
    <property type="term" value="C:high-density lipoprotein particle"/>
    <property type="evidence" value="ECO:0000314"/>
    <property type="project" value="BHF-UCL"/>
</dbReference>
<dbReference type="GO" id="GO:0031982">
    <property type="term" value="C:vesicle"/>
    <property type="evidence" value="ECO:0000314"/>
    <property type="project" value="BHF-UCL"/>
</dbReference>
<dbReference type="GO" id="GO:0015485">
    <property type="term" value="F:cholesterol binding"/>
    <property type="evidence" value="ECO:0000314"/>
    <property type="project" value="BHF-UCL"/>
</dbReference>
<dbReference type="GO" id="GO:0120020">
    <property type="term" value="F:cholesterol transfer activity"/>
    <property type="evidence" value="ECO:0000314"/>
    <property type="project" value="UniProtKB"/>
</dbReference>
<dbReference type="GO" id="GO:0008289">
    <property type="term" value="F:lipid binding"/>
    <property type="evidence" value="ECO:0000314"/>
    <property type="project" value="BHF-UCL"/>
</dbReference>
<dbReference type="GO" id="GO:0031210">
    <property type="term" value="F:phosphatidylcholine binding"/>
    <property type="evidence" value="ECO:0000314"/>
    <property type="project" value="BHF-UCL"/>
</dbReference>
<dbReference type="GO" id="GO:0005548">
    <property type="term" value="F:phospholipid transporter activity"/>
    <property type="evidence" value="ECO:0000314"/>
    <property type="project" value="BHF-UCL"/>
</dbReference>
<dbReference type="GO" id="GO:0017129">
    <property type="term" value="F:triglyceride binding"/>
    <property type="evidence" value="ECO:0000314"/>
    <property type="project" value="BHF-UCL"/>
</dbReference>
<dbReference type="GO" id="GO:0042632">
    <property type="term" value="P:cholesterol homeostasis"/>
    <property type="evidence" value="ECO:0000315"/>
    <property type="project" value="BHF-UCL"/>
</dbReference>
<dbReference type="GO" id="GO:0008203">
    <property type="term" value="P:cholesterol metabolic process"/>
    <property type="evidence" value="ECO:0000314"/>
    <property type="project" value="BHF-UCL"/>
</dbReference>
<dbReference type="GO" id="GO:0030301">
    <property type="term" value="P:cholesterol transport"/>
    <property type="evidence" value="ECO:0000314"/>
    <property type="project" value="UniProtKB"/>
</dbReference>
<dbReference type="GO" id="GO:0034375">
    <property type="term" value="P:high-density lipoprotein particle remodeling"/>
    <property type="evidence" value="ECO:0000314"/>
    <property type="project" value="UniProtKB"/>
</dbReference>
<dbReference type="GO" id="GO:0055088">
    <property type="term" value="P:lipid homeostasis"/>
    <property type="evidence" value="ECO:0000314"/>
    <property type="project" value="BHF-UCL"/>
</dbReference>
<dbReference type="GO" id="GO:0006869">
    <property type="term" value="P:lipid transport"/>
    <property type="evidence" value="ECO:0000314"/>
    <property type="project" value="BHF-UCL"/>
</dbReference>
<dbReference type="GO" id="GO:0034374">
    <property type="term" value="P:low-density lipoprotein particle remodeling"/>
    <property type="evidence" value="ECO:0000314"/>
    <property type="project" value="BHF-UCL"/>
</dbReference>
<dbReference type="GO" id="GO:0010745">
    <property type="term" value="P:negative regulation of macrophage derived foam cell differentiation"/>
    <property type="evidence" value="ECO:0000305"/>
    <property type="project" value="BHF-UCL"/>
</dbReference>
<dbReference type="GO" id="GO:0046470">
    <property type="term" value="P:phosphatidylcholine metabolic process"/>
    <property type="evidence" value="ECO:0000314"/>
    <property type="project" value="BHF-UCL"/>
</dbReference>
<dbReference type="GO" id="GO:0055091">
    <property type="term" value="P:phospholipid homeostasis"/>
    <property type="evidence" value="ECO:0000314"/>
    <property type="project" value="BHF-UCL"/>
</dbReference>
<dbReference type="GO" id="GO:0032376">
    <property type="term" value="P:positive regulation of cholesterol transport"/>
    <property type="evidence" value="ECO:0000314"/>
    <property type="project" value="BHF-UCL"/>
</dbReference>
<dbReference type="GO" id="GO:2001140">
    <property type="term" value="P:positive regulation of phospholipid transport"/>
    <property type="evidence" value="ECO:0000314"/>
    <property type="project" value="BHF-UCL"/>
</dbReference>
<dbReference type="GO" id="GO:0010874">
    <property type="term" value="P:regulation of cholesterol efflux"/>
    <property type="evidence" value="ECO:0000315"/>
    <property type="project" value="BHF-UCL"/>
</dbReference>
<dbReference type="GO" id="GO:0043691">
    <property type="term" value="P:reverse cholesterol transport"/>
    <property type="evidence" value="ECO:0000305"/>
    <property type="project" value="BHF-UCL"/>
</dbReference>
<dbReference type="GO" id="GO:0070328">
    <property type="term" value="P:triglyceride homeostasis"/>
    <property type="evidence" value="ECO:0000314"/>
    <property type="project" value="BHF-UCL"/>
</dbReference>
<dbReference type="GO" id="GO:0006641">
    <property type="term" value="P:triglyceride metabolic process"/>
    <property type="evidence" value="ECO:0000314"/>
    <property type="project" value="BHF-UCL"/>
</dbReference>
<dbReference type="GO" id="GO:0034197">
    <property type="term" value="P:triglyceride transport"/>
    <property type="evidence" value="ECO:0000314"/>
    <property type="project" value="UniProtKB"/>
</dbReference>
<dbReference type="GO" id="GO:0034372">
    <property type="term" value="P:very-low-density lipoprotein particle remodeling"/>
    <property type="evidence" value="ECO:0000314"/>
    <property type="project" value="UniProtKB"/>
</dbReference>
<dbReference type="CDD" id="cd00025">
    <property type="entry name" value="BPI1"/>
    <property type="match status" value="1"/>
</dbReference>
<dbReference type="FunFam" id="3.15.10.10:FF:000002">
    <property type="entry name" value="Cholesteryl ester transfer protein"/>
    <property type="match status" value="1"/>
</dbReference>
<dbReference type="FunFam" id="3.15.20.10:FF:000002">
    <property type="entry name" value="Cholesteryl ester transfer protein"/>
    <property type="match status" value="1"/>
</dbReference>
<dbReference type="Gene3D" id="3.15.10.10">
    <property type="entry name" value="Bactericidal permeability-increasing protein, domain 1"/>
    <property type="match status" value="1"/>
</dbReference>
<dbReference type="Gene3D" id="3.15.20.10">
    <property type="entry name" value="Bactericidal permeability-increasing protein, domain 2"/>
    <property type="match status" value="1"/>
</dbReference>
<dbReference type="InterPro" id="IPR017943">
    <property type="entry name" value="Bactericidal_perm-incr_a/b_dom"/>
</dbReference>
<dbReference type="InterPro" id="IPR017130">
    <property type="entry name" value="Cholesteryl_ester_transfer"/>
</dbReference>
<dbReference type="InterPro" id="IPR001124">
    <property type="entry name" value="Lipid-bd_serum_glycop_C"/>
</dbReference>
<dbReference type="InterPro" id="IPR017954">
    <property type="entry name" value="Lipid-bd_serum_glycop_CS"/>
</dbReference>
<dbReference type="InterPro" id="IPR017942">
    <property type="entry name" value="Lipid-bd_serum_glycop_N"/>
</dbReference>
<dbReference type="PANTHER" id="PTHR47616">
    <property type="entry name" value="CHOLESTERYL ESTER TRANSFER PROTEIN"/>
    <property type="match status" value="1"/>
</dbReference>
<dbReference type="PANTHER" id="PTHR47616:SF1">
    <property type="entry name" value="CHOLESTERYL ESTER TRANSFER PROTEIN"/>
    <property type="match status" value="1"/>
</dbReference>
<dbReference type="Pfam" id="PF01273">
    <property type="entry name" value="LBP_BPI_CETP"/>
    <property type="match status" value="1"/>
</dbReference>
<dbReference type="Pfam" id="PF02886">
    <property type="entry name" value="LBP_BPI_CETP_C"/>
    <property type="match status" value="1"/>
</dbReference>
<dbReference type="PIRSF" id="PIRSF037185">
    <property type="entry name" value="Cholesteryl_ester_transf"/>
    <property type="match status" value="1"/>
</dbReference>
<dbReference type="SMART" id="SM00328">
    <property type="entry name" value="BPI1"/>
    <property type="match status" value="1"/>
</dbReference>
<dbReference type="SMART" id="SM00329">
    <property type="entry name" value="BPI2"/>
    <property type="match status" value="1"/>
</dbReference>
<dbReference type="SUPFAM" id="SSF55394">
    <property type="entry name" value="Bactericidal permeability-increasing protein, BPI"/>
    <property type="match status" value="2"/>
</dbReference>
<dbReference type="PROSITE" id="PS00400">
    <property type="entry name" value="LBP_BPI_CETP"/>
    <property type="match status" value="1"/>
</dbReference>
<name>CETP_HUMAN</name>
<protein>
    <recommendedName>
        <fullName evidence="18">Cholesteryl ester transfer protein</fullName>
    </recommendedName>
    <alternativeName>
        <fullName evidence="23">Lipid transfer protein I</fullName>
    </alternativeName>
</protein>
<keyword id="KW-0002">3D-structure</keyword>
<keyword id="KW-0025">Alternative splicing</keyword>
<keyword id="KW-0065">Atherosclerosis</keyword>
<keyword id="KW-0153">Cholesterol metabolism</keyword>
<keyword id="KW-0903">Direct protein sequencing</keyword>
<keyword id="KW-0225">Disease variant</keyword>
<keyword id="KW-1015">Disulfide bond</keyword>
<keyword id="KW-0325">Glycoprotein</keyword>
<keyword id="KW-0443">Lipid metabolism</keyword>
<keyword id="KW-0445">Lipid transport</keyword>
<keyword id="KW-1267">Proteomics identification</keyword>
<keyword id="KW-1185">Reference proteome</keyword>
<keyword id="KW-0964">Secreted</keyword>
<keyword id="KW-0732">Signal</keyword>
<keyword id="KW-0753">Steroid metabolism</keyword>
<keyword id="KW-1207">Sterol metabolism</keyword>
<keyword id="KW-0813">Transport</keyword>
<feature type="signal peptide">
    <location>
        <begin position="1"/>
        <end position="17"/>
    </location>
</feature>
<feature type="chain" id="PRO_0000017155" description="Cholesteryl ester transfer protein">
    <location>
        <begin position="18"/>
        <end position="493"/>
    </location>
</feature>
<feature type="glycosylation site" description="N-linked (GlcNAc...) (complex) asparagine" evidence="9">
    <location>
        <position position="105"/>
    </location>
</feature>
<feature type="glycosylation site" description="N-linked (GlcNAc...) asparagine" evidence="6">
    <location>
        <position position="257"/>
    </location>
</feature>
<feature type="glycosylation site" description="N-linked (GlcNAc...) asparagine" evidence="6">
    <location>
        <position position="358"/>
    </location>
</feature>
<feature type="glycosylation site" description="N-linked (GlcNAc...) asparagine" evidence="1">
    <location>
        <position position="413"/>
    </location>
</feature>
<feature type="disulfide bond" evidence="7">
    <location>
        <begin position="160"/>
        <end position="201"/>
    </location>
</feature>
<feature type="splice variant" id="VSP_023645" description="In isoform 2." evidence="19">
    <location>
        <begin position="251"/>
        <end position="310"/>
    </location>
</feature>
<feature type="sequence variant" id="VAR_017018" description="In dbSNP:rs34065661." evidence="4">
    <original>A</original>
    <variation>G</variation>
    <location>
        <position position="15"/>
    </location>
</feature>
<feature type="sequence variant" id="VAR_033098" description="In dbSNP:rs34716057.">
    <original>R</original>
    <variation>W</variation>
    <location>
        <position position="154"/>
    </location>
</feature>
<feature type="sequence variant" id="VAR_033099" description="In HALP1; reduced secretion into plasma; dbSNP:rs1329944838." evidence="3">
    <original>L</original>
    <variation>P</variation>
    <location>
        <position position="168"/>
    </location>
</feature>
<feature type="sequence variant" id="VAR_033100" description="In HALP1; reduced secretion into plasma; dbSNP:rs142459781." evidence="3">
    <original>R</original>
    <variation>C</variation>
    <location>
        <position position="299"/>
    </location>
</feature>
<feature type="sequence variant" id="VAR_013919" description="In dbSNP:rs5881." evidence="2">
    <original>G</original>
    <variation>S</variation>
    <location>
        <position position="331"/>
    </location>
</feature>
<feature type="sequence variant" id="VAR_017019" description="In dbSNP:rs34855278." evidence="4">
    <original>V</original>
    <variation>M</variation>
    <location>
        <position position="385"/>
    </location>
</feature>
<feature type="sequence variant" id="VAR_013920" description="In dbSNP:rs5880." evidence="2 4">
    <original>A</original>
    <variation>P</variation>
    <location>
        <position position="390"/>
    </location>
</feature>
<feature type="sequence variant" id="VAR_013921" description="In dbSNP:rs5882." evidence="2 4 5 13 15 16">
    <original>V</original>
    <variation>I</variation>
    <location>
        <position position="422"/>
    </location>
</feature>
<feature type="sequence variant" id="VAR_031127" description="In dbSNP:rs2228667.">
    <original>V</original>
    <variation>M</variation>
    <location>
        <position position="455"/>
    </location>
</feature>
<feature type="sequence variant" id="VAR_004172" description="In HALP1; dbSNP:rs2303790." evidence="14">
    <original>D</original>
    <variation>G</variation>
    <location>
        <position position="459"/>
    </location>
</feature>
<feature type="sequence variant" id="VAR_013922" description="In dbSNP:rs1800777." evidence="4">
    <original>R</original>
    <variation>Q</variation>
    <location>
        <position position="468"/>
    </location>
</feature>
<feature type="sequence variant" id="VAR_013923" description="In dbSNP:rs5887." evidence="2">
    <original>V</original>
    <variation>M</variation>
    <location>
        <position position="486"/>
    </location>
</feature>
<feature type="mutagenesis site" description="Reduces triglyceride transfer and cholesteryl ester transfer 5-fold." evidence="7">
    <original>T</original>
    <variation>Y</variation>
    <location>
        <position position="155"/>
    </location>
</feature>
<feature type="mutagenesis site" description="Reduces triglyceride transfer 10-fold. No effect on cholesteryl ester transfer." evidence="7">
    <original>V</original>
    <variation>W</variation>
    <location>
        <position position="215"/>
    </location>
</feature>
<feature type="mutagenesis site" description="Reduces triglyceride transfer 10-fold. Slight reduction of cholesteryl ester transfer." evidence="7">
    <original>R</original>
    <variation>S</variation>
    <location>
        <position position="218"/>
    </location>
</feature>
<feature type="mutagenesis site" description="Reduces triglyceride transfer 5-fold. Slight reduction of cholesteryl ester transfer." evidence="7">
    <original>S</original>
    <variation>A</variation>
    <location>
        <position position="247"/>
    </location>
</feature>
<feature type="mutagenesis site" description="Not secreted." evidence="7">
    <original>F</original>
    <variation>R</variation>
    <location>
        <position position="282"/>
    </location>
</feature>
<feature type="mutagenesis site" description="Not secreted." evidence="7">
    <original>F</original>
    <variation>R</variation>
    <location>
        <position position="287"/>
    </location>
</feature>
<feature type="mutagenesis site" description="Not secreted." evidence="7">
    <original>F</original>
    <variation>D</variation>
    <location>
        <position position="309"/>
    </location>
</feature>
<feature type="mutagenesis site" description="Reduces cholesteryl ester transfer by 60%." evidence="7">
    <original>L</original>
    <variation>Q</variation>
    <location>
        <position position="313"/>
    </location>
</feature>
<feature type="mutagenesis site" description="Not secreted." evidence="7">
    <original>Y</original>
    <variation>S</variation>
    <location>
        <position position="392"/>
    </location>
</feature>
<feature type="mutagenesis site" description="Not secreted." evidence="7">
    <original>L</original>
    <variation>W</variation>
    <location>
        <position position="399"/>
    </location>
</feature>
<feature type="mutagenesis site" description="Reduces activity by 60%." evidence="7">
    <original>V</original>
    <variation>R</variation>
    <location>
        <position position="433"/>
    </location>
</feature>
<feature type="strand" evidence="24">
    <location>
        <begin position="27"/>
        <end position="33"/>
    </location>
</feature>
<feature type="helix" evidence="24">
    <location>
        <begin position="34"/>
        <end position="40"/>
    </location>
</feature>
<feature type="helix" evidence="24">
    <location>
        <begin position="41"/>
        <end position="43"/>
    </location>
</feature>
<feature type="helix" evidence="24">
    <location>
        <begin position="44"/>
        <end position="54"/>
    </location>
</feature>
<feature type="strand" evidence="24">
    <location>
        <begin position="60"/>
        <end position="66"/>
    </location>
</feature>
<feature type="turn" evidence="24">
    <location>
        <begin position="67"/>
        <end position="69"/>
    </location>
</feature>
<feature type="strand" evidence="24">
    <location>
        <begin position="70"/>
        <end position="94"/>
    </location>
</feature>
<feature type="turn" evidence="24">
    <location>
        <begin position="95"/>
        <end position="97"/>
    </location>
</feature>
<feature type="strand" evidence="24">
    <location>
        <begin position="98"/>
        <end position="120"/>
    </location>
</feature>
<feature type="helix" evidence="24">
    <location>
        <begin position="122"/>
        <end position="124"/>
    </location>
</feature>
<feature type="strand" evidence="24">
    <location>
        <begin position="128"/>
        <end position="149"/>
    </location>
</feature>
<feature type="strand" evidence="24">
    <location>
        <begin position="152"/>
        <end position="171"/>
    </location>
</feature>
<feature type="helix" evidence="25">
    <location>
        <begin position="172"/>
        <end position="174"/>
    </location>
</feature>
<feature type="helix" evidence="24">
    <location>
        <begin position="180"/>
        <end position="187"/>
    </location>
</feature>
<feature type="helix" evidence="24">
    <location>
        <begin position="189"/>
        <end position="222"/>
    </location>
</feature>
<feature type="strand" evidence="24">
    <location>
        <begin position="228"/>
        <end position="231"/>
    </location>
</feature>
<feature type="strand" evidence="24">
    <location>
        <begin position="234"/>
        <end position="236"/>
    </location>
</feature>
<feature type="strand" evidence="24">
    <location>
        <begin position="242"/>
        <end position="249"/>
    </location>
</feature>
<feature type="strand" evidence="24">
    <location>
        <begin position="252"/>
        <end position="255"/>
    </location>
</feature>
<feature type="helix" evidence="24">
    <location>
        <begin position="269"/>
        <end position="271"/>
    </location>
</feature>
<feature type="strand" evidence="24">
    <location>
        <begin position="274"/>
        <end position="283"/>
    </location>
</feature>
<feature type="helix" evidence="24">
    <location>
        <begin position="284"/>
        <end position="296"/>
    </location>
</feature>
<feature type="strand" evidence="24">
    <location>
        <begin position="300"/>
        <end position="304"/>
    </location>
</feature>
<feature type="helix" evidence="24">
    <location>
        <begin position="306"/>
        <end position="315"/>
    </location>
</feature>
<feature type="helix" evidence="24">
    <location>
        <begin position="323"/>
        <end position="325"/>
    </location>
</feature>
<feature type="helix" evidence="24">
    <location>
        <begin position="326"/>
        <end position="329"/>
    </location>
</feature>
<feature type="helix" evidence="24">
    <location>
        <begin position="333"/>
        <end position="335"/>
    </location>
</feature>
<feature type="strand" evidence="24">
    <location>
        <begin position="337"/>
        <end position="344"/>
    </location>
</feature>
<feature type="strand" evidence="24">
    <location>
        <begin position="347"/>
        <end position="351"/>
    </location>
</feature>
<feature type="strand" evidence="24">
    <location>
        <begin position="354"/>
        <end position="367"/>
    </location>
</feature>
<feature type="helix" evidence="24">
    <location>
        <begin position="372"/>
        <end position="374"/>
    </location>
</feature>
<feature type="strand" evidence="24">
    <location>
        <begin position="378"/>
        <end position="393"/>
    </location>
</feature>
<feature type="strand" evidence="24">
    <location>
        <begin position="396"/>
        <end position="416"/>
    </location>
</feature>
<feature type="helix" evidence="24">
    <location>
        <begin position="420"/>
        <end position="432"/>
    </location>
</feature>
<feature type="helix" evidence="24">
    <location>
        <begin position="434"/>
        <end position="451"/>
    </location>
</feature>
<feature type="turn" evidence="24">
    <location>
        <begin position="452"/>
        <end position="454"/>
    </location>
</feature>
<feature type="helix" evidence="24">
    <location>
        <begin position="455"/>
        <end position="457"/>
    </location>
</feature>
<feature type="strand" evidence="24">
    <location>
        <begin position="458"/>
        <end position="468"/>
    </location>
</feature>
<feature type="strand" evidence="24">
    <location>
        <begin position="471"/>
        <end position="479"/>
    </location>
</feature>
<feature type="helix" evidence="24">
    <location>
        <begin position="482"/>
        <end position="490"/>
    </location>
</feature>
<sequence length="493" mass="54756">MLAATVLTLALLGNAHACSKGTSHEAGIVCRITKPALLVLNHETAKVIQTAFQRASYPDITGEKAMMLLGQVKYGLHNIQISHLSIASSQVELVEAKSIDVSIQNVSVVFKGTLKYGYTTAWWLGIDQSIDFEIDSAIDLQINTQLTCDSGRVRTDAPDCYLSFHKLLLHLQGEREPGWIKQLFTNFISFTLKLVLKGQICKEINVISNIMADFVQTRAASILSDGDIGVDISLTGDPVITASYLESHHKGHFIYKNVSEDLPLPTFSPTLLGDSRMLYFWFSERVFHSLAKVAFQDGRLMLSLMGDEFKAVLETWGFNTNQEIFQEVVGGFPSQAQVTVHCLKMPKISCQNKGVVVNSSVMVKFLFPRPDQQHSVAYTFEEDIVTTVQASYSKKKLFLSLLDFQITPKTVSNLTESSSESVQSFLQSMITAVGIPEVMSRLEVVFTALMNSKGVSLFDIINPEIITRDGFLLLQMDFGFPEHLLVDFLQSLS</sequence>
<gene>
    <name evidence="22" type="primary">CETP</name>
</gene>
<evidence type="ECO:0000255" key="1"/>
<evidence type="ECO:0000269" key="2">
    <source>
    </source>
</evidence>
<evidence type="ECO:0000269" key="3">
    <source>
    </source>
</evidence>
<evidence type="ECO:0000269" key="4">
    <source>
    </source>
</evidence>
<evidence type="ECO:0000269" key="5">
    <source>
    </source>
</evidence>
<evidence type="ECO:0000269" key="6">
    <source>
    </source>
</evidence>
<evidence type="ECO:0000269" key="7">
    <source>
    </source>
</evidence>
<evidence type="ECO:0000269" key="8">
    <source>
    </source>
</evidence>
<evidence type="ECO:0000269" key="9">
    <source>
    </source>
</evidence>
<evidence type="ECO:0000269" key="10">
    <source>
    </source>
</evidence>
<evidence type="ECO:0000269" key="11">
    <source>
    </source>
</evidence>
<evidence type="ECO:0000269" key="12">
    <source>
    </source>
</evidence>
<evidence type="ECO:0000269" key="13">
    <source>
    </source>
</evidence>
<evidence type="ECO:0000269" key="14">
    <source>
    </source>
</evidence>
<evidence type="ECO:0000269" key="15">
    <source ref="3"/>
</evidence>
<evidence type="ECO:0000269" key="16">
    <source ref="7"/>
</evidence>
<evidence type="ECO:0000303" key="17">
    <source>
    </source>
</evidence>
<evidence type="ECO:0000303" key="18">
    <source>
    </source>
</evidence>
<evidence type="ECO:0000303" key="19">
    <source ref="7"/>
</evidence>
<evidence type="ECO:0000305" key="20"/>
<evidence type="ECO:0000305" key="21">
    <source>
    </source>
</evidence>
<evidence type="ECO:0000312" key="22">
    <source>
        <dbReference type="HGNC" id="HGNC:1869"/>
    </source>
</evidence>
<evidence type="ECO:0000312" key="23">
    <source>
        <dbReference type="MIM" id="118470"/>
    </source>
</evidence>
<evidence type="ECO:0007829" key="24">
    <source>
        <dbReference type="PDB" id="2OBD"/>
    </source>
</evidence>
<evidence type="ECO:0007829" key="25">
    <source>
        <dbReference type="PDB" id="4EWS"/>
    </source>
</evidence>
<reference key="1">
    <citation type="journal article" date="1987" name="Nature">
        <title>Cloning and sequencing of human cholesteryl ester transfer protein cDNA.</title>
        <authorList>
            <person name="Drayna D."/>
            <person name="Jarnagin A.S."/>
            <person name="McLean J."/>
            <person name="Henzel W."/>
            <person name="Kohr W."/>
            <person name="Fielding C."/>
            <person name="Lawn R."/>
        </authorList>
    </citation>
    <scope>NUCLEOTIDE SEQUENCE [MRNA] (ISOFORM 1)</scope>
    <scope>PARTIAL PROTEIN SEQUENCE</scope>
    <scope>FUNCTION</scope>
    <scope>TISSUE SPECIFICITY</scope>
    <scope>VARIANT ILE-422</scope>
</reference>
<reference key="2">
    <citation type="journal article" date="1990" name="Biochemistry">
        <title>Organization of the human cholesteryl ester transfer protein gene.</title>
        <authorList>
            <person name="Agellon L.B."/>
            <person name="Quinet E.M."/>
            <person name="Gillette T.G."/>
            <person name="Drayna D.T."/>
            <person name="Brown M.L."/>
            <person name="Tall A.R."/>
        </authorList>
    </citation>
    <scope>NUCLEOTIDE SEQUENCE [GENOMIC DNA]</scope>
</reference>
<reference key="3">
    <citation type="submission" date="2003-09" db="EMBL/GenBank/DDBJ databases">
        <authorList>
            <person name="Rieder M.J."/>
            <person name="da Ponte S.H."/>
            <person name="Kuldanek S.A."/>
            <person name="Rajkumar N."/>
            <person name="Smith J.D."/>
            <person name="Toth E.J."/>
            <person name="Nickerson D.A."/>
        </authorList>
    </citation>
    <scope>NUCLEOTIDE SEQUENCE [GENOMIC DNA]</scope>
    <scope>VARIANT ILE-422</scope>
</reference>
<reference key="4">
    <citation type="journal article" date="2004" name="Genome Res.">
        <title>The status, quality, and expansion of the NIH full-length cDNA project: the Mammalian Gene Collection (MGC).</title>
        <authorList>
            <consortium name="The MGC Project Team"/>
        </authorList>
    </citation>
    <scope>NUCLEOTIDE SEQUENCE [LARGE SCALE MRNA] (ISOFORM 1)</scope>
    <scope>VARIANT ILE-422</scope>
    <source>
        <tissue>Pancreas</tissue>
        <tissue>Spleen</tissue>
    </source>
</reference>
<reference key="5">
    <citation type="journal article" date="1996" name="J. Biol. Chem.">
        <title>Human cholesteryl ester transfer protein gene proximal promoter contains dietary cholesterol positive responsive elements and mediates expression in small intestine and periphery while predominant liver and spleen expression is controlled by 5'-distal sequences. Cis-acting sequences mapped in transgenic mice.</title>
        <authorList>
            <person name="Oliveira C.F.O."/>
            <person name="Chouinard R.A."/>
            <person name="Agellon L.B."/>
            <person name="Bruce C."/>
            <person name="Ma L."/>
            <person name="Walsh A."/>
            <person name="Breslow J.L."/>
            <person name="Tall A.R."/>
        </authorList>
    </citation>
    <scope>NUCLEOTIDE SEQUENCE [GENOMIC DNA] OF 1-15</scope>
</reference>
<reference key="6">
    <citation type="journal article" date="1997" name="Gene">
        <title>Sequencing of the cholesteryl ester transfer protein 5' regulatory region using artificial transposons.</title>
        <authorList>
            <person name="Williams S."/>
            <person name="Hayes L."/>
            <person name="Elsenboss L."/>
            <person name="Williams A."/>
            <person name="Andre C."/>
            <person name="Abramson R."/>
            <person name="Thompson J.F."/>
            <person name="Milos P.M."/>
        </authorList>
    </citation>
    <scope>NUCLEOTIDE SEQUENCE [GENOMIC DNA] OF 1-27</scope>
</reference>
<reference key="7">
    <citation type="submission" date="1992-02" db="EMBL/GenBank/DDBJ databases">
        <authorList>
            <person name="Dinchuk J.E."/>
            <person name="Hart J.T."/>
            <person name="Wirak D.O."/>
        </authorList>
    </citation>
    <scope>NUCLEOTIDE SEQUENCE [MRNA] OF 9-493 (ISOFORM 2)</scope>
    <scope>VARIANT ILE-422</scope>
    <source>
        <tissue>Liver</tissue>
    </source>
</reference>
<reference key="8">
    <citation type="journal article" date="1988" name="J. Biol. Chem.">
        <title>Monoclonal antibodies to the Mr 74,000 cholesteryl ester transfer protein neutralize all of the cholesteryl ester and triglyceride transfer activities in human plasma.</title>
        <authorList>
            <person name="Hesler C.B."/>
            <person name="Tall A.R."/>
            <person name="Swenson T.L."/>
            <person name="Weech P.K."/>
            <person name="Marcel Y.L."/>
            <person name="Milne R.W."/>
        </authorList>
    </citation>
    <scope>FUNCTION</scope>
    <scope>CATALYTIC ACTIVITY</scope>
    <scope>TISSUE SPECIFICITY</scope>
    <scope>SUBCELLULAR LOCATION</scope>
</reference>
<reference key="9">
    <citation type="journal article" date="2005" name="J. Proteome Res.">
        <title>Human plasma N-glycoproteome analysis by immunoaffinity subtraction, hydrazide chemistry, and mass spectrometry.</title>
        <authorList>
            <person name="Liu T."/>
            <person name="Qian W.-J."/>
            <person name="Gritsenko M.A."/>
            <person name="Camp D.G. II"/>
            <person name="Monroe M.E."/>
            <person name="Moore R.J."/>
            <person name="Smith R.D."/>
        </authorList>
    </citation>
    <scope>GLYCOSYLATION [LARGE SCALE ANALYSIS] AT ASN-257 AND ASN-358</scope>
    <source>
        <tissue>Plasma</tissue>
    </source>
</reference>
<reference key="10">
    <citation type="journal article" date="2007" name="Am. J. Hum. Genet.">
        <title>Common single-nucleotide polymorphisms act in concert to affect plasma levels of high-density lipoprotein cholesterol.</title>
        <authorList>
            <person name="Spirin V."/>
            <person name="Schmidt S."/>
            <person name="Pertsemlidis A."/>
            <person name="Cooper R.S."/>
            <person name="Cohen J.C."/>
            <person name="Sunyaev S.R."/>
        </authorList>
    </citation>
    <scope>INVOLVEMENT IN HDLCQ10</scope>
    <scope>POLYMORPHISM</scope>
</reference>
<reference key="11">
    <citation type="journal article" date="2009" name="Mol. Cell. Proteomics">
        <title>A strategy for precise and large scale identification of core fucosylated glycoproteins.</title>
        <authorList>
            <person name="Jia W."/>
            <person name="Lu Z."/>
            <person name="Fu Y."/>
            <person name="Wang H.P."/>
            <person name="Wang L.H."/>
            <person name="Chi H."/>
            <person name="Yuan Z.F."/>
            <person name="Zheng Z.B."/>
            <person name="Song L.N."/>
            <person name="Han H.H."/>
            <person name="Liang Y.M."/>
            <person name="Wang J.L."/>
            <person name="Cai Y."/>
            <person name="Zhang Y.K."/>
            <person name="Deng Y.L."/>
            <person name="Ying W.T."/>
            <person name="He S.M."/>
            <person name="Qian X.H."/>
        </authorList>
    </citation>
    <scope>GLYCOSYLATION AT ASN-105</scope>
</reference>
<reference key="12">
    <citation type="journal article" date="2014" name="J. Lipid Res.">
        <title>Cholesteryl ester transfer proteins from different species do not have equivalent activities.</title>
        <authorList>
            <person name="Morton R.E."/>
            <person name="Izem L."/>
        </authorList>
    </citation>
    <scope>FUNCTION</scope>
    <scope>SUBCELLULAR LOCATION</scope>
    <scope>CATALYTIC ACTIVITY</scope>
</reference>
<reference key="13">
    <citation type="journal article" date="2007" name="Nat. Struct. Mol. Biol.">
        <title>Crystal structure of cholesteryl ester transfer protein reveals a long tunnel and four bound lipid molecules.</title>
        <authorList>
            <person name="Qiu X."/>
            <person name="Mistry A."/>
            <person name="Ammirati M.J."/>
            <person name="Chrunyk B.A."/>
            <person name="Clark R.W."/>
            <person name="Cong Y."/>
            <person name="Culp J.S."/>
            <person name="Danley D.E."/>
            <person name="Freeman T.B."/>
            <person name="Geoghegan K.F."/>
            <person name="Griffor M.C."/>
            <person name="Hawrylik S.J."/>
            <person name="Hayward C.M."/>
            <person name="Hensley P."/>
            <person name="Hoth L.R."/>
            <person name="Karam G.A."/>
            <person name="Lira M.E."/>
            <person name="Lloyd D.B."/>
            <person name="McGrath K.M."/>
            <person name="Stutzman-Engwall K.J."/>
            <person name="Subashi A.K."/>
            <person name="Subashi T.A."/>
            <person name="Thompson J.F."/>
            <person name="Wang I.-K."/>
            <person name="Zhao H."/>
            <person name="Seddon A.P."/>
        </authorList>
    </citation>
    <scope>X-RAY CRYSTALLOGRAPHY (2.3 ANGSTROMS) OF 19-493 IN COMPLEX WITH LIPID</scope>
    <scope>FUNCTION</scope>
    <scope>DISULFIDE BOND</scope>
    <scope>MUTAGENESIS OF THR-155; VAL-215; ARG-218; SER-247; PHE-282; PHE-287; PHE-309; LEU-313; TYR-392; LEU-399 AND VAL-433</scope>
</reference>
<reference key="14">
    <citation type="journal article" date="1990" name="N. Engl. J. Med.">
        <title>Increased high-density lipoprotein levels caused by a common cholesteryl-ester transfer protein gene mutation.</title>
        <authorList>
            <person name="Inazu A."/>
            <person name="Brown M.L."/>
            <person name="Hesler C.B."/>
            <person name="Agellon L.B."/>
            <person name="Koizumi J."/>
            <person name="Takata K."/>
            <person name="Maruhama Y."/>
            <person name="Mabuchi H."/>
            <person name="Tall A.R."/>
        </authorList>
    </citation>
    <scope>INVOLVEMENT IN HALP1</scope>
</reference>
<reference key="15">
    <citation type="journal article" date="1993" name="J. Clin. Invest.">
        <title>A missense mutation in the cholesteryl ester transfer protein gene with possible dominant effects on plasma high density lipoproteins.</title>
        <authorList>
            <person name="Takahashi K."/>
            <person name="Jiang X.-C."/>
            <person name="Sakai N."/>
            <person name="Yamashita S."/>
            <person name="Hirano K."/>
            <person name="Bujo H."/>
            <person name="Yamazaki H."/>
            <person name="Kusunoki J."/>
            <person name="Miura T."/>
            <person name="Kussie P."/>
            <person name="Matsuzawa Y."/>
            <person name="Saito Y."/>
            <person name="Tall A."/>
        </authorList>
    </citation>
    <scope>VARIANT HALP1 GLY-459</scope>
</reference>
<reference key="16">
    <citation type="journal article" date="1999" name="Nat. Genet.">
        <title>Characterization of single-nucleotide polymorphisms in coding regions of human genes.</title>
        <authorList>
            <person name="Cargill M."/>
            <person name="Altshuler D."/>
            <person name="Ireland J."/>
            <person name="Sklar P."/>
            <person name="Ardlie K."/>
            <person name="Patil N."/>
            <person name="Shaw N."/>
            <person name="Lane C.R."/>
            <person name="Lim E.P."/>
            <person name="Kalyanaraman N."/>
            <person name="Nemesh J."/>
            <person name="Ziaugra L."/>
            <person name="Friedland L."/>
            <person name="Rolfe A."/>
            <person name="Warrington J."/>
            <person name="Lipshutz R."/>
            <person name="Daley G.Q."/>
            <person name="Lander E.S."/>
        </authorList>
    </citation>
    <scope>VARIANTS SER-331; PRO-390; ILE-422 AND MET-486</scope>
</reference>
<reference key="17">
    <citation type="journal article" date="1999" name="Nat. Genet.">
        <authorList>
            <person name="Cargill M."/>
            <person name="Altshuler D."/>
            <person name="Ireland J."/>
            <person name="Sklar P."/>
            <person name="Ardlie K."/>
            <person name="Patil N."/>
            <person name="Shaw N."/>
            <person name="Lane C.R."/>
            <person name="Lim E.P."/>
            <person name="Kalyanaraman N."/>
            <person name="Nemesh J."/>
            <person name="Ziaugra L."/>
            <person name="Friedland L."/>
            <person name="Rolfe A."/>
            <person name="Warrington J."/>
            <person name="Lipshutz R."/>
            <person name="Daley G.Q."/>
            <person name="Lander E.S."/>
        </authorList>
    </citation>
    <scope>ERRATUM OF PUBMED:10391209</scope>
</reference>
<reference key="18">
    <citation type="journal article" date="2002" name="J. Lipid Res.">
        <title>Two novel missense mutations in the CETP gene in Japanese hyperalphalipoproteinemic subjects: high-throughput assay by Invader assay.</title>
        <authorList>
            <person name="Nagano M."/>
            <person name="Yamashita S."/>
            <person name="Hirano K."/>
            <person name="Ito M."/>
            <person name="Maruyama T."/>
            <person name="Ishihara M."/>
            <person name="Sagehashi Y."/>
            <person name="Oka T."/>
            <person name="Kujiraoka T."/>
            <person name="Hattori H."/>
            <person name="Nakajima N."/>
            <person name="Egashira T."/>
            <person name="Kondo M."/>
            <person name="Sakai N."/>
            <person name="Matsuzawa Y."/>
        </authorList>
    </citation>
    <scope>VARIANTS HALP1 PRO-168 AND CYS-299</scope>
    <scope>CHARACTERIZATION OF VARIANTS HALP1 PRO-168 AND CYS-299</scope>
</reference>
<reference key="19">
    <citation type="journal article" date="2003" name="Hum. Mol. Genet.">
        <title>Association of extreme blood lipid profile phenotypic variation with 11 reverse cholesterol transport genes and 10 non-genetic cardiovascular disease risk factors.</title>
        <authorList>
            <person name="Morabia A."/>
            <person name="Cayanis E."/>
            <person name="Costanza M.C."/>
            <person name="Ross B.M."/>
            <person name="Flaherty M.S."/>
            <person name="Alvin G.B."/>
            <person name="Das K."/>
            <person name="Gilliam T.C."/>
        </authorList>
    </citation>
    <scope>VARIANTS GLY-15; MET-385; PRO-390; ILE-422 AND GLN-468</scope>
</reference>